<comment type="subunit">
    <text evidence="1">Part of the 50S ribosomal subunit. Binds 23S rRNA.</text>
</comment>
<comment type="similarity">
    <text evidence="1">Belongs to the eukaryotic ribosomal protein eL20 family.</text>
</comment>
<evidence type="ECO:0000255" key="1">
    <source>
        <dbReference type="HAMAP-Rule" id="MF_00273"/>
    </source>
</evidence>
<evidence type="ECO:0000305" key="2"/>
<proteinExistence type="inferred from homology"/>
<gene>
    <name evidence="1" type="primary">rpl18a</name>
    <name evidence="1" type="synonym">rpl20e</name>
    <name evidence="1" type="synonym">rplX</name>
    <name type="ordered locus">YG5714_1872</name>
</gene>
<organism>
    <name type="scientific">Saccharolobus islandicus (strain Y.G.57.14 / Yellowstone #1)</name>
    <name type="common">Sulfolobus islandicus</name>
    <dbReference type="NCBI Taxonomy" id="439386"/>
    <lineage>
        <taxon>Archaea</taxon>
        <taxon>Thermoproteota</taxon>
        <taxon>Thermoprotei</taxon>
        <taxon>Sulfolobales</taxon>
        <taxon>Sulfolobaceae</taxon>
        <taxon>Saccharolobus</taxon>
    </lineage>
</organism>
<reference key="1">
    <citation type="journal article" date="2009" name="Proc. Natl. Acad. Sci. U.S.A.">
        <title>Biogeography of the Sulfolobus islandicus pan-genome.</title>
        <authorList>
            <person name="Reno M.L."/>
            <person name="Held N.L."/>
            <person name="Fields C.J."/>
            <person name="Burke P.V."/>
            <person name="Whitaker R.J."/>
        </authorList>
    </citation>
    <scope>NUCLEOTIDE SEQUENCE [LARGE SCALE GENOMIC DNA]</scope>
    <source>
        <strain>Y.G.57.14 / Yellowstone #1</strain>
    </source>
</reference>
<name>RL18A_SACI7</name>
<keyword id="KW-0687">Ribonucleoprotein</keyword>
<keyword id="KW-0689">Ribosomal protein</keyword>
<keyword id="KW-0694">RNA-binding</keyword>
<keyword id="KW-0699">rRNA-binding</keyword>
<sequence length="86" mass="10344">MSEIKFYLVKGSALFGESHYPEKRKFVKIVRALNEKQAIEYIYSYFGSKNKIKRYNIKIEQISEIKEEEIPDRRIRELAKIDKIIM</sequence>
<dbReference type="EMBL" id="CP001403">
    <property type="protein sequence ID" value="ACP46128.1"/>
    <property type="molecule type" value="Genomic_DNA"/>
</dbReference>
<dbReference type="RefSeq" id="WP_012711732.1">
    <property type="nucleotide sequence ID" value="NC_012622.1"/>
</dbReference>
<dbReference type="SMR" id="C3N7D4"/>
<dbReference type="GeneID" id="84062107"/>
<dbReference type="KEGG" id="siy:YG5714_1872"/>
<dbReference type="HOGENOM" id="CLU_177460_0_0_2"/>
<dbReference type="Proteomes" id="UP000002308">
    <property type="component" value="Chromosome"/>
</dbReference>
<dbReference type="GO" id="GO:1990904">
    <property type="term" value="C:ribonucleoprotein complex"/>
    <property type="evidence" value="ECO:0007669"/>
    <property type="project" value="UniProtKB-KW"/>
</dbReference>
<dbReference type="GO" id="GO:0005840">
    <property type="term" value="C:ribosome"/>
    <property type="evidence" value="ECO:0007669"/>
    <property type="project" value="UniProtKB-KW"/>
</dbReference>
<dbReference type="GO" id="GO:0070180">
    <property type="term" value="F:large ribosomal subunit rRNA binding"/>
    <property type="evidence" value="ECO:0007669"/>
    <property type="project" value="UniProtKB-UniRule"/>
</dbReference>
<dbReference type="GO" id="GO:0003735">
    <property type="term" value="F:structural constituent of ribosome"/>
    <property type="evidence" value="ECO:0007669"/>
    <property type="project" value="InterPro"/>
</dbReference>
<dbReference type="GO" id="GO:0006412">
    <property type="term" value="P:translation"/>
    <property type="evidence" value="ECO:0007669"/>
    <property type="project" value="UniProtKB-UniRule"/>
</dbReference>
<dbReference type="Gene3D" id="3.10.20.10">
    <property type="match status" value="1"/>
</dbReference>
<dbReference type="HAMAP" id="MF_00273">
    <property type="entry name" value="Ribosomal_eL20"/>
    <property type="match status" value="1"/>
</dbReference>
<dbReference type="InterPro" id="IPR028877">
    <property type="entry name" value="Ribosomal_eL20"/>
</dbReference>
<dbReference type="InterPro" id="IPR023573">
    <property type="entry name" value="Ribosomal_eL20_dom"/>
</dbReference>
<dbReference type="NCBIfam" id="NF001981">
    <property type="entry name" value="PRK00773.1-1"/>
    <property type="match status" value="1"/>
</dbReference>
<dbReference type="Pfam" id="PF01775">
    <property type="entry name" value="Ribosomal_L18A"/>
    <property type="match status" value="1"/>
</dbReference>
<dbReference type="SUPFAM" id="SSF160374">
    <property type="entry name" value="RplX-like"/>
    <property type="match status" value="1"/>
</dbReference>
<accession>C3N7D4</accession>
<protein>
    <recommendedName>
        <fullName evidence="1">Large ribosomal subunit protein eL20</fullName>
    </recommendedName>
    <alternativeName>
        <fullName evidence="2">50S ribosomal protein L18Ae</fullName>
    </alternativeName>
    <alternativeName>
        <fullName evidence="1">50S ribosomal protein L20e</fullName>
    </alternativeName>
    <alternativeName>
        <fullName evidence="1">50S ribosomal protein LX</fullName>
    </alternativeName>
</protein>
<feature type="chain" id="PRO_1000204760" description="Large ribosomal subunit protein eL20">
    <location>
        <begin position="1"/>
        <end position="86"/>
    </location>
</feature>